<gene>
    <name type="primary">FMP42</name>
    <name type="ordered locus">YMR221C</name>
    <name type="ORF">YM9959.03C</name>
</gene>
<reference key="1">
    <citation type="journal article" date="1997" name="Nature">
        <title>The nucleotide sequence of Saccharomyces cerevisiae chromosome XIII.</title>
        <authorList>
            <person name="Bowman S."/>
            <person name="Churcher C.M."/>
            <person name="Badcock K."/>
            <person name="Brown D."/>
            <person name="Chillingworth T."/>
            <person name="Connor R."/>
            <person name="Dedman K."/>
            <person name="Devlin K."/>
            <person name="Gentles S."/>
            <person name="Hamlin N."/>
            <person name="Hunt S."/>
            <person name="Jagels K."/>
            <person name="Lye G."/>
            <person name="Moule S."/>
            <person name="Odell C."/>
            <person name="Pearson D."/>
            <person name="Rajandream M.A."/>
            <person name="Rice P."/>
            <person name="Skelton J."/>
            <person name="Walsh S.V."/>
            <person name="Whitehead S."/>
            <person name="Barrell B.G."/>
        </authorList>
    </citation>
    <scope>NUCLEOTIDE SEQUENCE [LARGE SCALE GENOMIC DNA]</scope>
    <source>
        <strain>ATCC 204508 / S288c</strain>
    </source>
</reference>
<reference key="2">
    <citation type="journal article" date="2014" name="G3 (Bethesda)">
        <title>The reference genome sequence of Saccharomyces cerevisiae: Then and now.</title>
        <authorList>
            <person name="Engel S.R."/>
            <person name="Dietrich F.S."/>
            <person name="Fisk D.G."/>
            <person name="Binkley G."/>
            <person name="Balakrishnan R."/>
            <person name="Costanzo M.C."/>
            <person name="Dwight S.S."/>
            <person name="Hitz B.C."/>
            <person name="Karra K."/>
            <person name="Nash R.S."/>
            <person name="Weng S."/>
            <person name="Wong E.D."/>
            <person name="Lloyd P."/>
            <person name="Skrzypek M.S."/>
            <person name="Miyasato S.R."/>
            <person name="Simison M."/>
            <person name="Cherry J.M."/>
        </authorList>
    </citation>
    <scope>GENOME REANNOTATION</scope>
    <source>
        <strain>ATCC 204508 / S288c</strain>
    </source>
</reference>
<reference key="3">
    <citation type="journal article" date="2003" name="Nature">
        <title>Global analysis of protein localization in budding yeast.</title>
        <authorList>
            <person name="Huh W.-K."/>
            <person name="Falvo J.V."/>
            <person name="Gerke L.C."/>
            <person name="Carroll A.S."/>
            <person name="Howson R.W."/>
            <person name="Weissman J.S."/>
            <person name="O'Shea E.K."/>
        </authorList>
    </citation>
    <scope>SUBCELLULAR LOCATION [LARGE SCALE ANALYSIS]</scope>
</reference>
<reference key="4">
    <citation type="journal article" date="2006" name="Proc. Natl. Acad. Sci. U.S.A.">
        <title>A global topology map of the Saccharomyces cerevisiae membrane proteome.</title>
        <authorList>
            <person name="Kim H."/>
            <person name="Melen K."/>
            <person name="Oesterberg M."/>
            <person name="von Heijne G."/>
        </authorList>
    </citation>
    <scope>TOPOLOGY [LARGE SCALE ANALYSIS]</scope>
    <source>
        <strain>ATCC 208353 / W303-1A</strain>
    </source>
</reference>
<reference key="5">
    <citation type="journal article" date="2007" name="J. Proteome Res.">
        <title>Large-scale phosphorylation analysis of alpha-factor-arrested Saccharomyces cerevisiae.</title>
        <authorList>
            <person name="Li X."/>
            <person name="Gerber S.A."/>
            <person name="Rudner A.D."/>
            <person name="Beausoleil S.A."/>
            <person name="Haas W."/>
            <person name="Villen J."/>
            <person name="Elias J.E."/>
            <person name="Gygi S.P."/>
        </authorList>
    </citation>
    <scope>PHOSPHORYLATION [LARGE SCALE ANALYSIS] AT SER-238; SER-249 AND SER-269</scope>
    <scope>IDENTIFICATION BY MASS SPECTROMETRY [LARGE SCALE ANALYSIS]</scope>
    <source>
        <strain>ADR376</strain>
    </source>
</reference>
<reference key="6">
    <citation type="journal article" date="2008" name="Mol. Cell. Proteomics">
        <title>A multidimensional chromatography technology for in-depth phosphoproteome analysis.</title>
        <authorList>
            <person name="Albuquerque C.P."/>
            <person name="Smolka M.B."/>
            <person name="Payne S.H."/>
            <person name="Bafna V."/>
            <person name="Eng J."/>
            <person name="Zhou H."/>
        </authorList>
    </citation>
    <scope>PHOSPHORYLATION [LARGE SCALE ANALYSIS] AT SER-249 AND SER-269</scope>
    <scope>IDENTIFICATION BY MASS SPECTROMETRY [LARGE SCALE ANALYSIS]</scope>
</reference>
<reference key="7">
    <citation type="journal article" date="2009" name="Science">
        <title>Global analysis of Cdk1 substrate phosphorylation sites provides insights into evolution.</title>
        <authorList>
            <person name="Holt L.J."/>
            <person name="Tuch B.B."/>
            <person name="Villen J."/>
            <person name="Johnson A.D."/>
            <person name="Gygi S.P."/>
            <person name="Morgan D.O."/>
        </authorList>
    </citation>
    <scope>PHOSPHORYLATION [LARGE SCALE ANALYSIS] AT SER-238; SER-249 AND SER-269</scope>
    <scope>IDENTIFICATION BY MASS SPECTROMETRY [LARGE SCALE ANALYSIS]</scope>
</reference>
<proteinExistence type="evidence at protein level"/>
<protein>
    <recommendedName>
        <fullName>Protein FMP42</fullName>
    </recommendedName>
</protein>
<comment type="subcellular location">
    <subcellularLocation>
        <location evidence="2">Vacuole membrane</location>
        <topology evidence="2">Multi-pass membrane protein</topology>
    </subcellularLocation>
</comment>
<comment type="similarity">
    <text evidence="3">Belongs to the SLC43A transporter (TC 2.A.1.44) family.</text>
</comment>
<organism>
    <name type="scientific">Saccharomyces cerevisiae (strain ATCC 204508 / S288c)</name>
    <name type="common">Baker's yeast</name>
    <dbReference type="NCBI Taxonomy" id="559292"/>
    <lineage>
        <taxon>Eukaryota</taxon>
        <taxon>Fungi</taxon>
        <taxon>Dikarya</taxon>
        <taxon>Ascomycota</taxon>
        <taxon>Saccharomycotina</taxon>
        <taxon>Saccharomycetes</taxon>
        <taxon>Saccharomycetales</taxon>
        <taxon>Saccharomycetaceae</taxon>
        <taxon>Saccharomyces</taxon>
    </lineage>
</organism>
<keyword id="KW-0472">Membrane</keyword>
<keyword id="KW-0597">Phosphoprotein</keyword>
<keyword id="KW-1185">Reference proteome</keyword>
<keyword id="KW-0812">Transmembrane</keyword>
<keyword id="KW-1133">Transmembrane helix</keyword>
<keyword id="KW-0813">Transport</keyword>
<keyword id="KW-0926">Vacuole</keyword>
<sequence>MTSTRTLRYAQVACACIWCLFSAGIIFGFAALKPILISEGVYHELCDPKDGDRLLCTAQDLKLNFIFALSATVTNIMALPVGKILDMYGPRVCGIIGSCLLFLASGNFISAKHLVSLWDPYLVGYTLLAVAGPFVFISCFQLANSFPQRSGTVLALLTGSFDSSSALFLLYRLLYQNWFPTLNVSRFFTLYLIVPVFILACQLTIMPHSSYKTVNHIAKIAVEGLDENGRLIEGDTGSGIIPDEQERQSLIAIEREEDSIPSRPQRRKSVLETYVEDKLQKKSGGIFGVLHGKSAYEQIKSPWFYLMLLFALVAMLRINYFIATVRTQEEYLLNDPDLALKLNSIFDMLLPLGGAVSIPFIGLLLDHTDTLSTLTILFTTSTAIGVFGLIPNSFTWNLIGIVLLVVYRPFYYTVVSDYSSKVFGFDTFGTVYGLLSCICGIFNMSQNLLDKWTHTTFNMNPFPINLTLVILTVVFSLTLTFYIRSQILPKPVNERGLSSNYQTI</sequence>
<dbReference type="EMBL" id="Z49939">
    <property type="protein sequence ID" value="CAA90192.1"/>
    <property type="molecule type" value="Genomic_DNA"/>
</dbReference>
<dbReference type="EMBL" id="BK006946">
    <property type="protein sequence ID" value="DAA10120.1"/>
    <property type="molecule type" value="Genomic_DNA"/>
</dbReference>
<dbReference type="PIR" id="S57589">
    <property type="entry name" value="S57589"/>
</dbReference>
<dbReference type="RefSeq" id="NP_013948.1">
    <property type="nucleotide sequence ID" value="NM_001182728.1"/>
</dbReference>
<dbReference type="SMR" id="Q04991"/>
<dbReference type="BioGRID" id="35399">
    <property type="interactions" value="57"/>
</dbReference>
<dbReference type="DIP" id="DIP-2606N"/>
<dbReference type="FunCoup" id="Q04991">
    <property type="interactions" value="86"/>
</dbReference>
<dbReference type="IntAct" id="Q04991">
    <property type="interactions" value="9"/>
</dbReference>
<dbReference type="MINT" id="Q04991"/>
<dbReference type="STRING" id="4932.YMR221C"/>
<dbReference type="iPTMnet" id="Q04991"/>
<dbReference type="PaxDb" id="4932-YMR221C"/>
<dbReference type="PeptideAtlas" id="Q04991"/>
<dbReference type="EnsemblFungi" id="YMR221C_mRNA">
    <property type="protein sequence ID" value="YMR221C"/>
    <property type="gene ID" value="YMR221C"/>
</dbReference>
<dbReference type="GeneID" id="855261"/>
<dbReference type="KEGG" id="sce:YMR221C"/>
<dbReference type="AGR" id="SGD:S000004834"/>
<dbReference type="SGD" id="S000004834">
    <property type="gene designation" value="FMP42"/>
</dbReference>
<dbReference type="VEuPathDB" id="FungiDB:YMR221C"/>
<dbReference type="eggNOG" id="ENOG502QRYG">
    <property type="taxonomic scope" value="Eukaryota"/>
</dbReference>
<dbReference type="GeneTree" id="ENSGT00940000166977"/>
<dbReference type="HOGENOM" id="CLU_014401_1_1_1"/>
<dbReference type="InParanoid" id="Q04991"/>
<dbReference type="OMA" id="CNILQQV"/>
<dbReference type="OrthoDB" id="330047at2759"/>
<dbReference type="BioCyc" id="YEAST:G3O-32902-MONOMER"/>
<dbReference type="BioGRID-ORCS" id="855261">
    <property type="hits" value="5 hits in 10 CRISPR screens"/>
</dbReference>
<dbReference type="PRO" id="PR:Q04991"/>
<dbReference type="Proteomes" id="UP000002311">
    <property type="component" value="Chromosome XIII"/>
</dbReference>
<dbReference type="RNAct" id="Q04991">
    <property type="molecule type" value="protein"/>
</dbReference>
<dbReference type="GO" id="GO:0000324">
    <property type="term" value="C:fungal-type vacuole"/>
    <property type="evidence" value="ECO:0007005"/>
    <property type="project" value="SGD"/>
</dbReference>
<dbReference type="GO" id="GO:0000329">
    <property type="term" value="C:fungal-type vacuole membrane"/>
    <property type="evidence" value="ECO:0007005"/>
    <property type="project" value="SGD"/>
</dbReference>
<dbReference type="GO" id="GO:0005739">
    <property type="term" value="C:mitochondrion"/>
    <property type="evidence" value="ECO:0007005"/>
    <property type="project" value="SGD"/>
</dbReference>
<dbReference type="GO" id="GO:0022857">
    <property type="term" value="F:transmembrane transporter activity"/>
    <property type="evidence" value="ECO:0007669"/>
    <property type="project" value="InterPro"/>
</dbReference>
<dbReference type="Gene3D" id="1.20.1250.20">
    <property type="entry name" value="MFS general substrate transporter like domains"/>
    <property type="match status" value="1"/>
</dbReference>
<dbReference type="InterPro" id="IPR011701">
    <property type="entry name" value="MFS"/>
</dbReference>
<dbReference type="InterPro" id="IPR036259">
    <property type="entry name" value="MFS_trans_sf"/>
</dbReference>
<dbReference type="InterPro" id="IPR052599">
    <property type="entry name" value="SLC43A_AATransporter"/>
</dbReference>
<dbReference type="PANTHER" id="PTHR20772">
    <property type="entry name" value="PROTEIN FMP42"/>
    <property type="match status" value="1"/>
</dbReference>
<dbReference type="PANTHER" id="PTHR20772:SF2">
    <property type="entry name" value="PROTEIN FMP42"/>
    <property type="match status" value="1"/>
</dbReference>
<dbReference type="Pfam" id="PF07690">
    <property type="entry name" value="MFS_1"/>
    <property type="match status" value="1"/>
</dbReference>
<dbReference type="SUPFAM" id="SSF103473">
    <property type="entry name" value="MFS general substrate transporter"/>
    <property type="match status" value="1"/>
</dbReference>
<name>FMP42_YEAST</name>
<accession>Q04991</accession>
<accession>D6W046</accession>
<evidence type="ECO:0000255" key="1"/>
<evidence type="ECO:0000269" key="2">
    <source>
    </source>
</evidence>
<evidence type="ECO:0000305" key="3"/>
<evidence type="ECO:0007744" key="4">
    <source>
    </source>
</evidence>
<evidence type="ECO:0007744" key="5">
    <source>
    </source>
</evidence>
<evidence type="ECO:0007744" key="6">
    <source>
    </source>
</evidence>
<feature type="chain" id="PRO_0000218642" description="Protein FMP42">
    <location>
        <begin position="1"/>
        <end position="504"/>
    </location>
</feature>
<feature type="topological domain" description="Vacuolar" evidence="1">
    <location>
        <begin position="1"/>
        <end position="11"/>
    </location>
</feature>
<feature type="transmembrane region" description="Helical" evidence="1">
    <location>
        <begin position="12"/>
        <end position="32"/>
    </location>
</feature>
<feature type="topological domain" description="Cytoplasmic" evidence="1">
    <location>
        <begin position="33"/>
        <end position="64"/>
    </location>
</feature>
<feature type="transmembrane region" description="Helical" evidence="1">
    <location>
        <begin position="65"/>
        <end position="85"/>
    </location>
</feature>
<feature type="topological domain" description="Vacuolar" evidence="1">
    <location>
        <begin position="86"/>
        <end position="91"/>
    </location>
</feature>
<feature type="transmembrane region" description="Helical" evidence="1">
    <location>
        <begin position="92"/>
        <end position="112"/>
    </location>
</feature>
<feature type="topological domain" description="Cytoplasmic" evidence="1">
    <location>
        <begin position="113"/>
        <end position="119"/>
    </location>
</feature>
<feature type="transmembrane region" description="Helical" evidence="1">
    <location>
        <begin position="120"/>
        <end position="140"/>
    </location>
</feature>
<feature type="topological domain" description="Vacuolar" evidence="1">
    <location>
        <begin position="141"/>
        <end position="150"/>
    </location>
</feature>
<feature type="transmembrane region" description="Helical" evidence="1">
    <location>
        <begin position="151"/>
        <end position="171"/>
    </location>
</feature>
<feature type="topological domain" description="Cytoplasmic" evidence="1">
    <location>
        <begin position="172"/>
        <end position="186"/>
    </location>
</feature>
<feature type="transmembrane region" description="Helical" evidence="1">
    <location>
        <begin position="187"/>
        <end position="207"/>
    </location>
</feature>
<feature type="topological domain" description="Vacuolar" evidence="1">
    <location>
        <begin position="208"/>
        <end position="302"/>
    </location>
</feature>
<feature type="transmembrane region" description="Helical" evidence="1">
    <location>
        <begin position="303"/>
        <end position="323"/>
    </location>
</feature>
<feature type="topological domain" description="Cytoplasmic" evidence="1">
    <location>
        <begin position="324"/>
        <end position="344"/>
    </location>
</feature>
<feature type="transmembrane region" description="Helical" evidence="1">
    <location>
        <begin position="345"/>
        <end position="365"/>
    </location>
</feature>
<feature type="topological domain" description="Vacuolar" evidence="1">
    <location>
        <begin position="366"/>
        <end position="385"/>
    </location>
</feature>
<feature type="transmembrane region" description="Helical" evidence="1">
    <location>
        <begin position="386"/>
        <end position="406"/>
    </location>
</feature>
<feature type="topological domain" description="Cytoplasmic" evidence="1">
    <location>
        <begin position="407"/>
        <end position="421"/>
    </location>
</feature>
<feature type="transmembrane region" description="Helical" evidence="1">
    <location>
        <begin position="422"/>
        <end position="442"/>
    </location>
</feature>
<feature type="topological domain" description="Vacuolar" evidence="1">
    <location>
        <begin position="443"/>
        <end position="462"/>
    </location>
</feature>
<feature type="transmembrane region" description="Helical" evidence="1">
    <location>
        <begin position="463"/>
        <end position="483"/>
    </location>
</feature>
<feature type="topological domain" description="Cytoplasmic" evidence="1">
    <location>
        <begin position="484"/>
        <end position="504"/>
    </location>
</feature>
<feature type="modified residue" description="Phosphoserine" evidence="4 6">
    <location>
        <position position="238"/>
    </location>
</feature>
<feature type="modified residue" description="Phosphoserine" evidence="4 5 6">
    <location>
        <position position="249"/>
    </location>
</feature>
<feature type="modified residue" description="Phosphoserine" evidence="4 5 6">
    <location>
        <position position="269"/>
    </location>
</feature>